<name>YBEY_PARS2</name>
<organism>
    <name type="scientific">Parafrankia sp. (strain EAN1pec)</name>
    <dbReference type="NCBI Taxonomy" id="298653"/>
    <lineage>
        <taxon>Bacteria</taxon>
        <taxon>Bacillati</taxon>
        <taxon>Actinomycetota</taxon>
        <taxon>Actinomycetes</taxon>
        <taxon>Frankiales</taxon>
        <taxon>Frankiaceae</taxon>
        <taxon>Parafrankia</taxon>
    </lineage>
</organism>
<accession>A8KYW3</accession>
<sequence length="159" mass="17481">MAVFVANESGVTDFDEVTLAALARFVLDTMKVNPLAELSVMLVEIDAMTDLHVRYMAEEGPTDVLAFPQDEAFEPSWSESPEEDPTTLLGDVVLCPEVARRQAAQAGHGMERELHILCTHGILHLLGYDHAEPEEEREMWKLQNSLLASWDTAAGTGAS</sequence>
<dbReference type="EC" id="3.1.-.-" evidence="1"/>
<dbReference type="EMBL" id="CP000820">
    <property type="protein sequence ID" value="ABW11549.1"/>
    <property type="molecule type" value="Genomic_DNA"/>
</dbReference>
<dbReference type="RefSeq" id="WP_020459715.1">
    <property type="nucleotide sequence ID" value="NC_009921.1"/>
</dbReference>
<dbReference type="SMR" id="A8KYW3"/>
<dbReference type="STRING" id="298653.Franean1_2113"/>
<dbReference type="KEGG" id="fre:Franean1_2113"/>
<dbReference type="eggNOG" id="COG0319">
    <property type="taxonomic scope" value="Bacteria"/>
</dbReference>
<dbReference type="HOGENOM" id="CLU_106710_3_2_11"/>
<dbReference type="GO" id="GO:0005737">
    <property type="term" value="C:cytoplasm"/>
    <property type="evidence" value="ECO:0007669"/>
    <property type="project" value="UniProtKB-SubCell"/>
</dbReference>
<dbReference type="GO" id="GO:0004222">
    <property type="term" value="F:metalloendopeptidase activity"/>
    <property type="evidence" value="ECO:0007669"/>
    <property type="project" value="InterPro"/>
</dbReference>
<dbReference type="GO" id="GO:0004521">
    <property type="term" value="F:RNA endonuclease activity"/>
    <property type="evidence" value="ECO:0007669"/>
    <property type="project" value="UniProtKB-UniRule"/>
</dbReference>
<dbReference type="GO" id="GO:0008270">
    <property type="term" value="F:zinc ion binding"/>
    <property type="evidence" value="ECO:0007669"/>
    <property type="project" value="UniProtKB-UniRule"/>
</dbReference>
<dbReference type="GO" id="GO:0006364">
    <property type="term" value="P:rRNA processing"/>
    <property type="evidence" value="ECO:0007669"/>
    <property type="project" value="UniProtKB-UniRule"/>
</dbReference>
<dbReference type="Gene3D" id="3.40.390.30">
    <property type="entry name" value="Metalloproteases ('zincins'), catalytic domain"/>
    <property type="match status" value="1"/>
</dbReference>
<dbReference type="HAMAP" id="MF_00009">
    <property type="entry name" value="Endoribonucl_YbeY"/>
    <property type="match status" value="1"/>
</dbReference>
<dbReference type="InterPro" id="IPR023091">
    <property type="entry name" value="MetalPrtase_cat_dom_sf_prd"/>
</dbReference>
<dbReference type="InterPro" id="IPR002036">
    <property type="entry name" value="YbeY"/>
</dbReference>
<dbReference type="InterPro" id="IPR020549">
    <property type="entry name" value="YbeY_CS"/>
</dbReference>
<dbReference type="NCBIfam" id="TIGR00043">
    <property type="entry name" value="rRNA maturation RNase YbeY"/>
    <property type="match status" value="1"/>
</dbReference>
<dbReference type="PANTHER" id="PTHR46986">
    <property type="entry name" value="ENDORIBONUCLEASE YBEY, CHLOROPLASTIC"/>
    <property type="match status" value="1"/>
</dbReference>
<dbReference type="PANTHER" id="PTHR46986:SF1">
    <property type="entry name" value="ENDORIBONUCLEASE YBEY, CHLOROPLASTIC"/>
    <property type="match status" value="1"/>
</dbReference>
<dbReference type="Pfam" id="PF02130">
    <property type="entry name" value="YbeY"/>
    <property type="match status" value="1"/>
</dbReference>
<dbReference type="SUPFAM" id="SSF55486">
    <property type="entry name" value="Metalloproteases ('zincins'), catalytic domain"/>
    <property type="match status" value="1"/>
</dbReference>
<dbReference type="PROSITE" id="PS01306">
    <property type="entry name" value="UPF0054"/>
    <property type="match status" value="1"/>
</dbReference>
<evidence type="ECO:0000255" key="1">
    <source>
        <dbReference type="HAMAP-Rule" id="MF_00009"/>
    </source>
</evidence>
<keyword id="KW-0963">Cytoplasm</keyword>
<keyword id="KW-0255">Endonuclease</keyword>
<keyword id="KW-0378">Hydrolase</keyword>
<keyword id="KW-0479">Metal-binding</keyword>
<keyword id="KW-0540">Nuclease</keyword>
<keyword id="KW-0690">Ribosome biogenesis</keyword>
<keyword id="KW-0698">rRNA processing</keyword>
<keyword id="KW-0862">Zinc</keyword>
<protein>
    <recommendedName>
        <fullName evidence="1">Endoribonuclease YbeY</fullName>
        <ecNumber evidence="1">3.1.-.-</ecNumber>
    </recommendedName>
</protein>
<reference key="1">
    <citation type="journal article" date="2007" name="Genome Res.">
        <title>Genome characteristics of facultatively symbiotic Frankia sp. strains reflect host range and host plant biogeography.</title>
        <authorList>
            <person name="Normand P."/>
            <person name="Lapierre P."/>
            <person name="Tisa L.S."/>
            <person name="Gogarten J.P."/>
            <person name="Alloisio N."/>
            <person name="Bagnarol E."/>
            <person name="Bassi C.A."/>
            <person name="Berry A.M."/>
            <person name="Bickhart D.M."/>
            <person name="Choisne N."/>
            <person name="Couloux A."/>
            <person name="Cournoyer B."/>
            <person name="Cruveiller S."/>
            <person name="Daubin V."/>
            <person name="Demange N."/>
            <person name="Francino M.P."/>
            <person name="Goltsman E."/>
            <person name="Huang Y."/>
            <person name="Kopp O.R."/>
            <person name="Labarre L."/>
            <person name="Lapidus A."/>
            <person name="Lavire C."/>
            <person name="Marechal J."/>
            <person name="Martinez M."/>
            <person name="Mastronunzio J.E."/>
            <person name="Mullin B.C."/>
            <person name="Niemann J."/>
            <person name="Pujic P."/>
            <person name="Rawnsley T."/>
            <person name="Rouy Z."/>
            <person name="Schenowitz C."/>
            <person name="Sellstedt A."/>
            <person name="Tavares F."/>
            <person name="Tomkins J.P."/>
            <person name="Vallenet D."/>
            <person name="Valverde C."/>
            <person name="Wall L.G."/>
            <person name="Wang Y."/>
            <person name="Medigue C."/>
            <person name="Benson D.R."/>
        </authorList>
    </citation>
    <scope>NUCLEOTIDE SEQUENCE [LARGE SCALE GENOMIC DNA]</scope>
    <source>
        <strain>EAN1pec</strain>
    </source>
</reference>
<feature type="chain" id="PRO_1000089178" description="Endoribonuclease YbeY">
    <location>
        <begin position="1"/>
        <end position="159"/>
    </location>
</feature>
<feature type="binding site" evidence="1">
    <location>
        <position position="120"/>
    </location>
    <ligand>
        <name>Zn(2+)</name>
        <dbReference type="ChEBI" id="CHEBI:29105"/>
        <note>catalytic</note>
    </ligand>
</feature>
<feature type="binding site" evidence="1">
    <location>
        <position position="124"/>
    </location>
    <ligand>
        <name>Zn(2+)</name>
        <dbReference type="ChEBI" id="CHEBI:29105"/>
        <note>catalytic</note>
    </ligand>
</feature>
<feature type="binding site" evidence="1">
    <location>
        <position position="130"/>
    </location>
    <ligand>
        <name>Zn(2+)</name>
        <dbReference type="ChEBI" id="CHEBI:29105"/>
        <note>catalytic</note>
    </ligand>
</feature>
<proteinExistence type="inferred from homology"/>
<comment type="function">
    <text evidence="1">Single strand-specific metallo-endoribonuclease involved in late-stage 70S ribosome quality control and in maturation of the 3' terminus of the 16S rRNA.</text>
</comment>
<comment type="cofactor">
    <cofactor evidence="1">
        <name>Zn(2+)</name>
        <dbReference type="ChEBI" id="CHEBI:29105"/>
    </cofactor>
    <text evidence="1">Binds 1 zinc ion.</text>
</comment>
<comment type="subcellular location">
    <subcellularLocation>
        <location evidence="1">Cytoplasm</location>
    </subcellularLocation>
</comment>
<comment type="similarity">
    <text evidence="1">Belongs to the endoribonuclease YbeY family.</text>
</comment>
<gene>
    <name evidence="1" type="primary">ybeY</name>
    <name type="ordered locus">Franean1_2113</name>
</gene>